<dbReference type="EC" id="3.1.2.-" evidence="6"/>
<dbReference type="EMBL" id="CH476605">
    <property type="protein sequence ID" value="EAU31623.1"/>
    <property type="molecule type" value="Genomic_DNA"/>
</dbReference>
<dbReference type="RefSeq" id="XP_001217071.1">
    <property type="nucleotide sequence ID" value="XM_001217071.1"/>
</dbReference>
<dbReference type="SMR" id="Q0CCY4"/>
<dbReference type="STRING" id="341663.Q0CCY4"/>
<dbReference type="EnsemblFungi" id="EAU31623">
    <property type="protein sequence ID" value="EAU31623"/>
    <property type="gene ID" value="ATEG_08450"/>
</dbReference>
<dbReference type="GeneID" id="4353100"/>
<dbReference type="VEuPathDB" id="FungiDB:ATEG_08450"/>
<dbReference type="eggNOG" id="KOG0813">
    <property type="taxonomic scope" value="Eukaryota"/>
</dbReference>
<dbReference type="HOGENOM" id="CLU_048478_1_0_1"/>
<dbReference type="OMA" id="QLVTAMH"/>
<dbReference type="OrthoDB" id="17458at2759"/>
<dbReference type="BioCyc" id="MetaCyc:MONOMER-21292"/>
<dbReference type="Proteomes" id="UP000007963">
    <property type="component" value="Unassembled WGS sequence"/>
</dbReference>
<dbReference type="GO" id="GO:0016787">
    <property type="term" value="F:hydrolase activity"/>
    <property type="evidence" value="ECO:0007669"/>
    <property type="project" value="UniProtKB-KW"/>
</dbReference>
<dbReference type="GO" id="GO:0046872">
    <property type="term" value="F:metal ion binding"/>
    <property type="evidence" value="ECO:0007669"/>
    <property type="project" value="UniProtKB-KW"/>
</dbReference>
<dbReference type="GO" id="GO:0044550">
    <property type="term" value="P:secondary metabolite biosynthetic process"/>
    <property type="evidence" value="ECO:0007669"/>
    <property type="project" value="UniProtKB-ARBA"/>
</dbReference>
<dbReference type="CDD" id="cd07722">
    <property type="entry name" value="LACTB2-like_MBL-fold"/>
    <property type="match status" value="1"/>
</dbReference>
<dbReference type="FunFam" id="3.60.15.10:FF:000041">
    <property type="entry name" value="Metallo-beta-lactamase domain protein"/>
    <property type="match status" value="1"/>
</dbReference>
<dbReference type="Gene3D" id="3.60.15.10">
    <property type="entry name" value="Ribonuclease Z/Hydroxyacylglutathione hydrolase-like"/>
    <property type="match status" value="1"/>
</dbReference>
<dbReference type="Gene3D" id="1.10.10.10">
    <property type="entry name" value="Winged helix-like DNA-binding domain superfamily/Winged helix DNA-binding domain"/>
    <property type="match status" value="1"/>
</dbReference>
<dbReference type="InterPro" id="IPR047921">
    <property type="entry name" value="LACTB2-like_MBL-fold"/>
</dbReference>
<dbReference type="InterPro" id="IPR001279">
    <property type="entry name" value="Metallo-B-lactamas"/>
</dbReference>
<dbReference type="InterPro" id="IPR036866">
    <property type="entry name" value="RibonucZ/Hydroxyglut_hydro"/>
</dbReference>
<dbReference type="InterPro" id="IPR050662">
    <property type="entry name" value="Sec-metab_biosynth-thioest"/>
</dbReference>
<dbReference type="InterPro" id="IPR036388">
    <property type="entry name" value="WH-like_DNA-bd_sf"/>
</dbReference>
<dbReference type="PANTHER" id="PTHR23131:SF3">
    <property type="entry name" value="ATROCHRYSONE CARBOXYL ACP THIOESTERASE"/>
    <property type="match status" value="1"/>
</dbReference>
<dbReference type="PANTHER" id="PTHR23131">
    <property type="entry name" value="ENDORIBONUCLEASE LACTB2"/>
    <property type="match status" value="1"/>
</dbReference>
<dbReference type="Pfam" id="PF00753">
    <property type="entry name" value="Lactamase_B"/>
    <property type="match status" value="2"/>
</dbReference>
<dbReference type="SMART" id="SM00849">
    <property type="entry name" value="Lactamase_B"/>
    <property type="match status" value="1"/>
</dbReference>
<dbReference type="SUPFAM" id="SSF56281">
    <property type="entry name" value="Metallo-hydrolase/oxidoreductase"/>
    <property type="match status" value="1"/>
</dbReference>
<sequence>MKRGGYRQINKALNISAFENYLDIQHDHLPKLNDVEQLSPRVLRVLGQNAGKFTLQGTNTYIVGTGRERLIIDTGQGIPEWTDLISSTLRDSAITLSHVLLTHWHGDHTGGVPDLIRLYPHLSNSIFKHSSSNGQQPIIDGQVFHVEGATVRAMHSPGHSHDHMCFILEEENAMFTGDNVLGHGTSAVELLGIWMASLRLMQSSGCRVGYPAHGAVIADLLAKIAGELDQKARREARVVRTLARNKREEQSKGRSKGSMTVQELVTAMHGKGLDDQVRTMALEPFINEVLGKLAGDGCVAFEVRRGEKRWFIVNDVTSSP</sequence>
<gene>
    <name evidence="11" type="primary">gedB</name>
    <name type="ORF">ATEG_08450</name>
</gene>
<feature type="chain" id="PRO_0000437054" description="Atrochrysone carboxyl ACP thioesterase">
    <location>
        <begin position="1"/>
        <end position="320"/>
    </location>
</feature>
<feature type="active site" description="Proton donor/acceptor" evidence="2">
    <location>
        <position position="107"/>
    </location>
</feature>
<feature type="binding site" evidence="1">
    <location>
        <position position="103"/>
    </location>
    <ligand>
        <name>Zn(2+)</name>
        <dbReference type="ChEBI" id="CHEBI:29105"/>
        <label>1</label>
        <note>catalytic</note>
    </ligand>
</feature>
<feature type="binding site" evidence="1">
    <location>
        <position position="105"/>
    </location>
    <ligand>
        <name>Zn(2+)</name>
        <dbReference type="ChEBI" id="CHEBI:29105"/>
        <label>1</label>
        <note>catalytic</note>
    </ligand>
</feature>
<feature type="binding site" evidence="1">
    <location>
        <position position="107"/>
    </location>
    <ligand>
        <name>Zn(2+)</name>
        <dbReference type="ChEBI" id="CHEBI:29105"/>
        <label>2</label>
        <note>catalytic</note>
    </ligand>
</feature>
<feature type="binding site" evidence="1">
    <location>
        <position position="108"/>
    </location>
    <ligand>
        <name>Zn(2+)</name>
        <dbReference type="ChEBI" id="CHEBI:29105"/>
        <label>2</label>
        <note>catalytic</note>
    </ligand>
</feature>
<name>GEDB_ASPTN</name>
<proteinExistence type="evidence at protein level"/>
<evidence type="ECO:0000250" key="1">
    <source>
        <dbReference type="UniProtKB" id="Q988B9"/>
    </source>
</evidence>
<evidence type="ECO:0000255" key="2"/>
<evidence type="ECO:0000269" key="3">
    <source>
    </source>
</evidence>
<evidence type="ECO:0000269" key="4">
    <source>
    </source>
</evidence>
<evidence type="ECO:0000269" key="5">
    <source>
    </source>
</evidence>
<evidence type="ECO:0000269" key="6">
    <source>
    </source>
</evidence>
<evidence type="ECO:0000269" key="7">
    <source>
    </source>
</evidence>
<evidence type="ECO:0000269" key="8">
    <source>
    </source>
</evidence>
<evidence type="ECO:0000269" key="9">
    <source>
    </source>
</evidence>
<evidence type="ECO:0000303" key="10">
    <source>
    </source>
</evidence>
<evidence type="ECO:0000303" key="11">
    <source>
    </source>
</evidence>
<evidence type="ECO:0000305" key="12"/>
<keyword id="KW-0378">Hydrolase</keyword>
<keyword id="KW-0479">Metal-binding</keyword>
<keyword id="KW-1185">Reference proteome</keyword>
<keyword id="KW-0862">Zinc</keyword>
<organism>
    <name type="scientific">Aspergillus terreus (strain NIH 2624 / FGSC A1156)</name>
    <dbReference type="NCBI Taxonomy" id="341663"/>
    <lineage>
        <taxon>Eukaryota</taxon>
        <taxon>Fungi</taxon>
        <taxon>Dikarya</taxon>
        <taxon>Ascomycota</taxon>
        <taxon>Pezizomycotina</taxon>
        <taxon>Eurotiomycetes</taxon>
        <taxon>Eurotiomycetidae</taxon>
        <taxon>Eurotiales</taxon>
        <taxon>Aspergillaceae</taxon>
        <taxon>Aspergillus</taxon>
        <taxon>Aspergillus subgen. Circumdati</taxon>
    </lineage>
</organism>
<comment type="function">
    <text evidence="3 4 5 6 7 8 9">Atrochrysone carboxyl ACP thioesterase; part of the gene cluster that mediates the biosynthesis of geodin, an intermediate in the biosynthesis of other natural products (PubMed:19549600, PubMed:24009710, PubMed:7665560). The pathway begins with the synthesis of atrochrysone thioester by the polyketide synthase (PKS) gedC (PubMed:12536215, PubMed:19549600). The atrochrysone carboxyl ACP thioesterase gedB then breaks the thioester bond and releases the atrochrysone carboxylic acid from gedC (PubMed:19549600). The atrochrysone carboxylic acid is then converted to atrochrysone which is further transformed into emodinanthrone (PubMed:24009710). The next step is performed by the emodinanthrone oxygenase gedH that catalyzes the oxidation of emodinanthrone to emodin (PubMed:1810248). Emodin O-methyltransferase encoded probably by gedA then catalyzes methylation of the 8-hydroxy group of emodin to form questin (PubMed:1444712). Ring cleavage of questin by questin oxidase gedK leads to desmethylsulochrin via several intermediates including questin epoxide (PubMed:3182756). Another methylation step probably catalyzed by methyltransferase gedG leads to the formation of sulochrin which is further converted to dihydrogeodin by the sulochrin halogenase gedL (PubMed:24009710). Finally, the dihydrogeodin oxidase gedJ catalyzes the stereospecific phenol oxidative coupling reaction converting dihydrogeodin to geodin (PubMed:7665560).</text>
</comment>
<comment type="catalytic activity">
    <reaction evidence="6">
        <text>atrochrysone carboxyl-[ACP] + H2O = atrochrysone carboxylate + holo-[ACP] + H(+)</text>
        <dbReference type="Rhea" id="RHEA:64236"/>
        <dbReference type="Rhea" id="RHEA-COMP:9685"/>
        <dbReference type="Rhea" id="RHEA-COMP:16552"/>
        <dbReference type="ChEBI" id="CHEBI:15377"/>
        <dbReference type="ChEBI" id="CHEBI:15378"/>
        <dbReference type="ChEBI" id="CHEBI:64479"/>
        <dbReference type="ChEBI" id="CHEBI:149712"/>
        <dbReference type="ChEBI" id="CHEBI:149713"/>
    </reaction>
    <physiologicalReaction direction="left-to-right" evidence="6">
        <dbReference type="Rhea" id="RHEA:64237"/>
    </physiologicalReaction>
</comment>
<comment type="cofactor">
    <cofactor evidence="1">
        <name>Zn(2+)</name>
        <dbReference type="ChEBI" id="CHEBI:29105"/>
    </cofactor>
    <text evidence="1">Binds 2 Zn(2+) ions per subunit.</text>
</comment>
<comment type="pathway">
    <text evidence="7">Secondary metabolite biosynthesis.</text>
</comment>
<comment type="similarity">
    <text evidence="12">Belongs to the metallo-beta-lactamase superfamily.</text>
</comment>
<reference key="1">
    <citation type="submission" date="2005-09" db="EMBL/GenBank/DDBJ databases">
        <title>Annotation of the Aspergillus terreus NIH2624 genome.</title>
        <authorList>
            <person name="Birren B.W."/>
            <person name="Lander E.S."/>
            <person name="Galagan J.E."/>
            <person name="Nusbaum C."/>
            <person name="Devon K."/>
            <person name="Henn M."/>
            <person name="Ma L.-J."/>
            <person name="Jaffe D.B."/>
            <person name="Butler J."/>
            <person name="Alvarez P."/>
            <person name="Gnerre S."/>
            <person name="Grabherr M."/>
            <person name="Kleber M."/>
            <person name="Mauceli E.W."/>
            <person name="Brockman W."/>
            <person name="Rounsley S."/>
            <person name="Young S.K."/>
            <person name="LaButti K."/>
            <person name="Pushparaj V."/>
            <person name="DeCaprio D."/>
            <person name="Crawford M."/>
            <person name="Koehrsen M."/>
            <person name="Engels R."/>
            <person name="Montgomery P."/>
            <person name="Pearson M."/>
            <person name="Howarth C."/>
            <person name="Larson L."/>
            <person name="Luoma S."/>
            <person name="White J."/>
            <person name="Alvarado L."/>
            <person name="Kodira C.D."/>
            <person name="Zeng Q."/>
            <person name="Oleary S."/>
            <person name="Yandava C."/>
            <person name="Denning D.W."/>
            <person name="Nierman W.C."/>
            <person name="Milne T."/>
            <person name="Madden K."/>
        </authorList>
    </citation>
    <scope>NUCLEOTIDE SEQUENCE [LARGE SCALE GENOMIC DNA]</scope>
    <source>
        <strain>NIH 2624 / FGSC A1156</strain>
    </source>
</reference>
<reference key="2">
    <citation type="journal article" date="1988" name="J. Biochem.">
        <title>A novel anthraquinone ring cleavage enzyme from Aspergillus terreus.</title>
        <authorList>
            <person name="Fujii I."/>
            <person name="Ebizuka Y."/>
            <person name="Sankawa U."/>
        </authorList>
    </citation>
    <scope>FUNCTION</scope>
</reference>
<reference key="3">
    <citation type="journal article" date="1991" name="Biochem. Int.">
        <title>Identification of emodinanthrone oxygenase in fungus Aspergillus terreus.</title>
        <authorList>
            <person name="Fujii I."/>
            <person name="Chen Z.G."/>
            <person name="Ebizuka Y."/>
            <person name="Sankawa U."/>
        </authorList>
    </citation>
    <scope>FUNCTION</scope>
</reference>
<reference key="4">
    <citation type="journal article" date="1992" name="Arch. Microbiol.">
        <title>Emodin O-methyltransferase from Aspergillus terreus.</title>
        <authorList>
            <person name="Chen Z.G."/>
            <person name="Fujii I."/>
            <person name="Ebizuka Y."/>
            <person name="Sankawa U."/>
        </authorList>
    </citation>
    <scope>FUNCTION</scope>
</reference>
<reference key="5">
    <citation type="journal article" date="1995" name="J. Biol. Chem.">
        <title>Molecular cloning and heterologous expression of the gene encoding dihydrogeodin oxidase, a multicopper blue enzyme from Aspergillus terreus.</title>
        <authorList>
            <person name="Huang K.X."/>
            <person name="Fujii I."/>
            <person name="Ebizuka Y."/>
            <person name="Gomi K."/>
            <person name="Sankawa U."/>
        </authorList>
    </citation>
    <scope>FUNCTION</scope>
</reference>
<reference key="6">
    <citation type="journal article" date="2003" name="Nat. Biotechnol.">
        <title>Integrating transcriptional and metabolite profiles to direct the engineering of lovastatin-producing fungal strains.</title>
        <authorList>
            <person name="Askenazi M."/>
            <person name="Driggers E.M."/>
            <person name="Holtzman D.A."/>
            <person name="Norman T.C."/>
            <person name="Iverson S."/>
            <person name="Zimmer D.P."/>
            <person name="Boers M.E."/>
            <person name="Blomquist P.R."/>
            <person name="Martinez E.J."/>
            <person name="Monreal A.W."/>
            <person name="Feibelman T.P."/>
            <person name="Mayorga M.E."/>
            <person name="Maxon M.E."/>
            <person name="Sykes K."/>
            <person name="Tobin J.V."/>
            <person name="Cordero E."/>
            <person name="Salama S.R."/>
            <person name="Trueheart J."/>
            <person name="Royer J.C."/>
            <person name="Madden K.T."/>
        </authorList>
    </citation>
    <scope>FUNCTION</scope>
</reference>
<reference key="7">
    <citation type="journal article" date="2009" name="Chem. Biol.">
        <title>Physically discrete beta-lactamase-type thioesterase catalyzes product release in atrochrysone synthesis by iterative type I polyketide synthase.</title>
        <authorList>
            <person name="Awakawa T."/>
            <person name="Yokota K."/>
            <person name="Funa N."/>
            <person name="Doi F."/>
            <person name="Mori N."/>
            <person name="Watanabe H."/>
            <person name="Horinouchi S."/>
        </authorList>
    </citation>
    <scope>FUNCTION</scope>
    <scope>CATALYTIC ACTIVITY</scope>
</reference>
<reference key="8">
    <citation type="journal article" date="2013" name="PLoS ONE">
        <title>Heterologous reconstitution of the intact geodin gene cluster in Aspergillus nidulans through a simple and versatile PCR based approach.</title>
        <authorList>
            <person name="Nielsen M.T."/>
            <person name="Nielsen J.B."/>
            <person name="Anyaogu D.C."/>
            <person name="Holm D.K."/>
            <person name="Nielsen K.F."/>
            <person name="Larsen T.O."/>
            <person name="Mortensen U.H."/>
        </authorList>
    </citation>
    <scope>FUNCTION</scope>
</reference>
<protein>
    <recommendedName>
        <fullName evidence="10">Atrochrysone carboxyl ACP thioesterase</fullName>
        <shortName evidence="10">ACTE</shortName>
        <ecNumber evidence="6">3.1.2.-</ecNumber>
    </recommendedName>
    <alternativeName>
        <fullName evidence="11">Geodin synthesis protein B</fullName>
    </alternativeName>
</protein>
<accession>Q0CCY4</accession>